<comment type="function">
    <text evidence="1">Catalyzes the hydrolysis of 4-amino-2-methyl-5-hydroxymethylpyrimidine pyrophosphate (HMP-PP) to 4-amino-2-methyl-5-hydroxymethylpyrimidine phosphate (HMP-P).</text>
</comment>
<comment type="catalytic activity">
    <reaction evidence="1">
        <text>4-amino-2-methyl-5-(diphosphooxymethyl)pyrimidine + H2O = 4-amino-2-methyl-5-(phosphooxymethyl)pyrimidine + phosphate + H(+)</text>
        <dbReference type="Rhea" id="RHEA:27914"/>
        <dbReference type="ChEBI" id="CHEBI:15377"/>
        <dbReference type="ChEBI" id="CHEBI:15378"/>
        <dbReference type="ChEBI" id="CHEBI:43474"/>
        <dbReference type="ChEBI" id="CHEBI:57841"/>
        <dbReference type="ChEBI" id="CHEBI:58354"/>
    </reaction>
</comment>
<comment type="cofactor">
    <cofactor evidence="1">
        <name>Mg(2+)</name>
        <dbReference type="ChEBI" id="CHEBI:18420"/>
    </cofactor>
</comment>
<comment type="similarity">
    <text evidence="1">Belongs to the HAD-like hydrolase superfamily. Cof family.</text>
</comment>
<proteinExistence type="inferred from homology"/>
<sequence>MARLAAFDMDGTLLMPEHHLGRETIATLARLRERDITLTFATGRHVLEMRHILGTLSLDAYLITGNGTRIHSLEGDVLHRQDLDPQVADTVMHHAWDTRASMHVFNDNGWFTGQEIPALLQAHVYSGFRYQVIDIKSIPAHQVTKICFCGDHDDLIRLRIQLNEALEERAHLCFSAVDCLEVLPLGCNKGSALAVLSNHLGLSLADCMAFGDAMNDREMLGSVGRGLIMGNAMPQLIAALPHLSVIGHCGNQAVSHFLTHWLDNPHLPYSPE</sequence>
<evidence type="ECO:0000255" key="1">
    <source>
        <dbReference type="HAMAP-Rule" id="MF_01847"/>
    </source>
</evidence>
<accession>B5EXJ7</accession>
<name>COF_SALA4</name>
<dbReference type="EC" id="3.6.1.-" evidence="1"/>
<dbReference type="EMBL" id="CP001138">
    <property type="protein sequence ID" value="ACH52102.1"/>
    <property type="molecule type" value="Genomic_DNA"/>
</dbReference>
<dbReference type="RefSeq" id="WP_000113042.1">
    <property type="nucleotide sequence ID" value="NC_011149.1"/>
</dbReference>
<dbReference type="SMR" id="B5EXJ7"/>
<dbReference type="KEGG" id="sea:SeAg_B0497"/>
<dbReference type="HOGENOM" id="CLU_044146_5_2_6"/>
<dbReference type="Proteomes" id="UP000008819">
    <property type="component" value="Chromosome"/>
</dbReference>
<dbReference type="GO" id="GO:0002145">
    <property type="term" value="F:4-amino-5-hydroxymethyl-2-methylpyrimidine diphosphatase activity"/>
    <property type="evidence" value="ECO:0007669"/>
    <property type="project" value="RHEA"/>
</dbReference>
<dbReference type="GO" id="GO:0000287">
    <property type="term" value="F:magnesium ion binding"/>
    <property type="evidence" value="ECO:0000250"/>
    <property type="project" value="UniProtKB"/>
</dbReference>
<dbReference type="GO" id="GO:0016791">
    <property type="term" value="F:phosphatase activity"/>
    <property type="evidence" value="ECO:0000250"/>
    <property type="project" value="UniProtKB"/>
</dbReference>
<dbReference type="CDD" id="cd07516">
    <property type="entry name" value="HAD_Pase"/>
    <property type="match status" value="1"/>
</dbReference>
<dbReference type="FunFam" id="3.30.1240.10:FF:000002">
    <property type="entry name" value="HMP-PP phosphatase"/>
    <property type="match status" value="1"/>
</dbReference>
<dbReference type="Gene3D" id="3.30.1240.10">
    <property type="match status" value="1"/>
</dbReference>
<dbReference type="Gene3D" id="3.40.50.1000">
    <property type="entry name" value="HAD superfamily/HAD-like"/>
    <property type="match status" value="1"/>
</dbReference>
<dbReference type="HAMAP" id="MF_01847">
    <property type="entry name" value="HMP_PP_phosphat"/>
    <property type="match status" value="1"/>
</dbReference>
<dbReference type="InterPro" id="IPR000150">
    <property type="entry name" value="Cof"/>
</dbReference>
<dbReference type="InterPro" id="IPR036412">
    <property type="entry name" value="HAD-like_sf"/>
</dbReference>
<dbReference type="InterPro" id="IPR006379">
    <property type="entry name" value="HAD-SF_hydro_IIB"/>
</dbReference>
<dbReference type="InterPro" id="IPR023214">
    <property type="entry name" value="HAD_sf"/>
</dbReference>
<dbReference type="InterPro" id="IPR023938">
    <property type="entry name" value="HMP-PP_phosphatase"/>
</dbReference>
<dbReference type="NCBIfam" id="TIGR00099">
    <property type="entry name" value="Cof-subfamily"/>
    <property type="match status" value="1"/>
</dbReference>
<dbReference type="NCBIfam" id="TIGR01484">
    <property type="entry name" value="HAD-SF-IIB"/>
    <property type="match status" value="1"/>
</dbReference>
<dbReference type="NCBIfam" id="NF011705">
    <property type="entry name" value="PRK15126.1"/>
    <property type="match status" value="1"/>
</dbReference>
<dbReference type="PANTHER" id="PTHR47267">
    <property type="match status" value="1"/>
</dbReference>
<dbReference type="PANTHER" id="PTHR47267:SF2">
    <property type="entry name" value="HMP-PP PHOSPHATASE"/>
    <property type="match status" value="1"/>
</dbReference>
<dbReference type="Pfam" id="PF08282">
    <property type="entry name" value="Hydrolase_3"/>
    <property type="match status" value="1"/>
</dbReference>
<dbReference type="SFLD" id="SFLDG01140">
    <property type="entry name" value="C2.B:_Phosphomannomutase_and_P"/>
    <property type="match status" value="1"/>
</dbReference>
<dbReference type="SFLD" id="SFLDS00003">
    <property type="entry name" value="Haloacid_Dehalogenase"/>
    <property type="match status" value="1"/>
</dbReference>
<dbReference type="SUPFAM" id="SSF56784">
    <property type="entry name" value="HAD-like"/>
    <property type="match status" value="1"/>
</dbReference>
<dbReference type="PROSITE" id="PS01228">
    <property type="entry name" value="COF_1"/>
    <property type="match status" value="1"/>
</dbReference>
<dbReference type="PROSITE" id="PS01229">
    <property type="entry name" value="COF_2"/>
    <property type="match status" value="1"/>
</dbReference>
<gene>
    <name evidence="1" type="primary">cof</name>
    <name type="ordered locus">SeAg_B0497</name>
</gene>
<keyword id="KW-0378">Hydrolase</keyword>
<keyword id="KW-0460">Magnesium</keyword>
<keyword id="KW-0479">Metal-binding</keyword>
<organism>
    <name type="scientific">Salmonella agona (strain SL483)</name>
    <dbReference type="NCBI Taxonomy" id="454166"/>
    <lineage>
        <taxon>Bacteria</taxon>
        <taxon>Pseudomonadati</taxon>
        <taxon>Pseudomonadota</taxon>
        <taxon>Gammaproteobacteria</taxon>
        <taxon>Enterobacterales</taxon>
        <taxon>Enterobacteriaceae</taxon>
        <taxon>Salmonella</taxon>
    </lineage>
</organism>
<protein>
    <recommendedName>
        <fullName evidence="1">HMP-PP phosphatase</fullName>
        <ecNumber evidence="1">3.6.1.-</ecNumber>
    </recommendedName>
</protein>
<reference key="1">
    <citation type="journal article" date="2011" name="J. Bacteriol.">
        <title>Comparative genomics of 28 Salmonella enterica isolates: evidence for CRISPR-mediated adaptive sublineage evolution.</title>
        <authorList>
            <person name="Fricke W.F."/>
            <person name="Mammel M.K."/>
            <person name="McDermott P.F."/>
            <person name="Tartera C."/>
            <person name="White D.G."/>
            <person name="Leclerc J.E."/>
            <person name="Ravel J."/>
            <person name="Cebula T.A."/>
        </authorList>
    </citation>
    <scope>NUCLEOTIDE SEQUENCE [LARGE SCALE GENOMIC DNA]</scope>
    <source>
        <strain>SL483</strain>
    </source>
</reference>
<feature type="chain" id="PRO_1000188506" description="HMP-PP phosphatase">
    <location>
        <begin position="1"/>
        <end position="272"/>
    </location>
</feature>
<feature type="active site" description="Nucleophile" evidence="1">
    <location>
        <position position="8"/>
    </location>
</feature>
<feature type="binding site" evidence="1">
    <location>
        <position position="8"/>
    </location>
    <ligand>
        <name>Mg(2+)</name>
        <dbReference type="ChEBI" id="CHEBI:18420"/>
    </ligand>
</feature>
<feature type="binding site" evidence="1">
    <location>
        <position position="10"/>
    </location>
    <ligand>
        <name>Mg(2+)</name>
        <dbReference type="ChEBI" id="CHEBI:18420"/>
    </ligand>
</feature>
<feature type="binding site" evidence="1">
    <location>
        <position position="212"/>
    </location>
    <ligand>
        <name>Mg(2+)</name>
        <dbReference type="ChEBI" id="CHEBI:18420"/>
    </ligand>
</feature>